<accession>A2SCY7</accession>
<reference key="1">
    <citation type="journal article" date="2007" name="J. Bacteriol.">
        <title>Whole-genome analysis of the methyl tert-butyl ether-degrading beta-proteobacterium Methylibium petroleiphilum PM1.</title>
        <authorList>
            <person name="Kane S.R."/>
            <person name="Chakicherla A.Y."/>
            <person name="Chain P.S.G."/>
            <person name="Schmidt R."/>
            <person name="Shin M.W."/>
            <person name="Legler T.C."/>
            <person name="Scow K.M."/>
            <person name="Larimer F.W."/>
            <person name="Lucas S.M."/>
            <person name="Richardson P.M."/>
            <person name="Hristova K.R."/>
        </authorList>
    </citation>
    <scope>NUCLEOTIDE SEQUENCE [LARGE SCALE GENOMIC DNA]</scope>
    <source>
        <strain>ATCC BAA-1232 / LMG 22953 / PM1</strain>
    </source>
</reference>
<comment type="function">
    <text evidence="2">Cell wall formation.</text>
</comment>
<comment type="catalytic activity">
    <reaction evidence="2">
        <text>2 D-alanine + ATP = D-alanyl-D-alanine + ADP + phosphate + H(+)</text>
        <dbReference type="Rhea" id="RHEA:11224"/>
        <dbReference type="ChEBI" id="CHEBI:15378"/>
        <dbReference type="ChEBI" id="CHEBI:30616"/>
        <dbReference type="ChEBI" id="CHEBI:43474"/>
        <dbReference type="ChEBI" id="CHEBI:57416"/>
        <dbReference type="ChEBI" id="CHEBI:57822"/>
        <dbReference type="ChEBI" id="CHEBI:456216"/>
        <dbReference type="EC" id="6.3.2.4"/>
    </reaction>
</comment>
<comment type="cofactor">
    <cofactor evidence="1">
        <name>Mg(2+)</name>
        <dbReference type="ChEBI" id="CHEBI:18420"/>
    </cofactor>
    <cofactor evidence="1">
        <name>Mn(2+)</name>
        <dbReference type="ChEBI" id="CHEBI:29035"/>
    </cofactor>
    <text evidence="1">Binds 2 magnesium or manganese ions per subunit.</text>
</comment>
<comment type="pathway">
    <text evidence="2">Cell wall biogenesis; peptidoglycan biosynthesis.</text>
</comment>
<comment type="subcellular location">
    <subcellularLocation>
        <location evidence="2">Cytoplasm</location>
    </subcellularLocation>
</comment>
<comment type="similarity">
    <text evidence="2">Belongs to the D-alanine--D-alanine ligase family.</text>
</comment>
<organism>
    <name type="scientific">Methylibium petroleiphilum (strain ATCC BAA-1232 / LMG 22953 / PM1)</name>
    <dbReference type="NCBI Taxonomy" id="420662"/>
    <lineage>
        <taxon>Bacteria</taxon>
        <taxon>Pseudomonadati</taxon>
        <taxon>Pseudomonadota</taxon>
        <taxon>Betaproteobacteria</taxon>
        <taxon>Burkholderiales</taxon>
        <taxon>Sphaerotilaceae</taxon>
        <taxon>Methylibium</taxon>
    </lineage>
</organism>
<keyword id="KW-0067">ATP-binding</keyword>
<keyword id="KW-0133">Cell shape</keyword>
<keyword id="KW-0961">Cell wall biogenesis/degradation</keyword>
<keyword id="KW-0963">Cytoplasm</keyword>
<keyword id="KW-0436">Ligase</keyword>
<keyword id="KW-0460">Magnesium</keyword>
<keyword id="KW-0464">Manganese</keyword>
<keyword id="KW-0479">Metal-binding</keyword>
<keyword id="KW-0547">Nucleotide-binding</keyword>
<keyword id="KW-0573">Peptidoglycan synthesis</keyword>
<keyword id="KW-1185">Reference proteome</keyword>
<feature type="chain" id="PRO_0000341131" description="D-alanine--D-alanine ligase">
    <location>
        <begin position="1"/>
        <end position="319"/>
    </location>
</feature>
<feature type="domain" description="ATP-grasp" evidence="2">
    <location>
        <begin position="109"/>
        <end position="313"/>
    </location>
</feature>
<feature type="binding site" evidence="2">
    <location>
        <begin position="139"/>
        <end position="194"/>
    </location>
    <ligand>
        <name>ATP</name>
        <dbReference type="ChEBI" id="CHEBI:30616"/>
    </ligand>
</feature>
<feature type="binding site" evidence="2">
    <location>
        <position position="266"/>
    </location>
    <ligand>
        <name>Mg(2+)</name>
        <dbReference type="ChEBI" id="CHEBI:18420"/>
        <label>1</label>
    </ligand>
</feature>
<feature type="binding site" evidence="2">
    <location>
        <position position="280"/>
    </location>
    <ligand>
        <name>Mg(2+)</name>
        <dbReference type="ChEBI" id="CHEBI:18420"/>
        <label>1</label>
    </ligand>
</feature>
<feature type="binding site" evidence="2">
    <location>
        <position position="280"/>
    </location>
    <ligand>
        <name>Mg(2+)</name>
        <dbReference type="ChEBI" id="CHEBI:18420"/>
        <label>2</label>
    </ligand>
</feature>
<feature type="binding site" evidence="2">
    <location>
        <position position="282"/>
    </location>
    <ligand>
        <name>Mg(2+)</name>
        <dbReference type="ChEBI" id="CHEBI:18420"/>
        <label>2</label>
    </ligand>
</feature>
<proteinExistence type="inferred from homology"/>
<sequence length="319" mass="34333">MSATPDPRSFGKVAVLMGGTSAERDISLMSGGGVLKALQDAGVDAHAFDPKDHELVELRRQGFQRCFIALHGRHGEDGTVQGALELLRIPYTGSGVMASAIAMDKIMTKRVWLAEGLPTPRYVRLAPDEQTPERVRGVPDDLGLPLIVKPPREGSSIGVTKVLGYSQMQDAVALSARHDPDVLCEEFIDGAEVTCPVLGEGANARALPVIRIVPPEAGYDYQNKYFTDEVKYLCPSGLPADEEAEIQRIVLAAYRALGCRGWGRADLMIRASDRKPFLLEMNTSPGMTGHSLVPMSAKAAGLGYEQLCLHILQGAALDA</sequence>
<name>DDL_METPP</name>
<gene>
    <name evidence="2" type="primary">ddl</name>
    <name type="ordered locus">Mpe_A0464</name>
</gene>
<dbReference type="EC" id="6.3.2.4" evidence="2"/>
<dbReference type="EMBL" id="CP000555">
    <property type="protein sequence ID" value="ABM93426.1"/>
    <property type="molecule type" value="Genomic_DNA"/>
</dbReference>
<dbReference type="RefSeq" id="WP_011828064.1">
    <property type="nucleotide sequence ID" value="NC_008825.1"/>
</dbReference>
<dbReference type="SMR" id="A2SCY7"/>
<dbReference type="STRING" id="420662.Mpe_A0464"/>
<dbReference type="KEGG" id="mpt:Mpe_A0464"/>
<dbReference type="eggNOG" id="COG1181">
    <property type="taxonomic scope" value="Bacteria"/>
</dbReference>
<dbReference type="HOGENOM" id="CLU_039268_1_2_4"/>
<dbReference type="UniPathway" id="UPA00219"/>
<dbReference type="Proteomes" id="UP000000366">
    <property type="component" value="Chromosome"/>
</dbReference>
<dbReference type="GO" id="GO:0005829">
    <property type="term" value="C:cytosol"/>
    <property type="evidence" value="ECO:0007669"/>
    <property type="project" value="TreeGrafter"/>
</dbReference>
<dbReference type="GO" id="GO:0005524">
    <property type="term" value="F:ATP binding"/>
    <property type="evidence" value="ECO:0007669"/>
    <property type="project" value="UniProtKB-KW"/>
</dbReference>
<dbReference type="GO" id="GO:0008716">
    <property type="term" value="F:D-alanine-D-alanine ligase activity"/>
    <property type="evidence" value="ECO:0007669"/>
    <property type="project" value="UniProtKB-UniRule"/>
</dbReference>
<dbReference type="GO" id="GO:0046872">
    <property type="term" value="F:metal ion binding"/>
    <property type="evidence" value="ECO:0007669"/>
    <property type="project" value="UniProtKB-KW"/>
</dbReference>
<dbReference type="GO" id="GO:0071555">
    <property type="term" value="P:cell wall organization"/>
    <property type="evidence" value="ECO:0007669"/>
    <property type="project" value="UniProtKB-KW"/>
</dbReference>
<dbReference type="GO" id="GO:0009252">
    <property type="term" value="P:peptidoglycan biosynthetic process"/>
    <property type="evidence" value="ECO:0007669"/>
    <property type="project" value="UniProtKB-UniRule"/>
</dbReference>
<dbReference type="GO" id="GO:0008360">
    <property type="term" value="P:regulation of cell shape"/>
    <property type="evidence" value="ECO:0007669"/>
    <property type="project" value="UniProtKB-KW"/>
</dbReference>
<dbReference type="FunFam" id="3.40.50.20:FF:000013">
    <property type="entry name" value="D-alanine--D-alanine ligase"/>
    <property type="match status" value="1"/>
</dbReference>
<dbReference type="Gene3D" id="3.40.50.20">
    <property type="match status" value="1"/>
</dbReference>
<dbReference type="Gene3D" id="3.30.1490.20">
    <property type="entry name" value="ATP-grasp fold, A domain"/>
    <property type="match status" value="1"/>
</dbReference>
<dbReference type="Gene3D" id="3.30.470.20">
    <property type="entry name" value="ATP-grasp fold, B domain"/>
    <property type="match status" value="1"/>
</dbReference>
<dbReference type="HAMAP" id="MF_00047">
    <property type="entry name" value="Dala_Dala_lig"/>
    <property type="match status" value="1"/>
</dbReference>
<dbReference type="InterPro" id="IPR011761">
    <property type="entry name" value="ATP-grasp"/>
</dbReference>
<dbReference type="InterPro" id="IPR013815">
    <property type="entry name" value="ATP_grasp_subdomain_1"/>
</dbReference>
<dbReference type="InterPro" id="IPR000291">
    <property type="entry name" value="D-Ala_lig_Van_CS"/>
</dbReference>
<dbReference type="InterPro" id="IPR005905">
    <property type="entry name" value="D_ala_D_ala"/>
</dbReference>
<dbReference type="InterPro" id="IPR011095">
    <property type="entry name" value="Dala_Dala_lig_C"/>
</dbReference>
<dbReference type="InterPro" id="IPR011127">
    <property type="entry name" value="Dala_Dala_lig_N"/>
</dbReference>
<dbReference type="InterPro" id="IPR016185">
    <property type="entry name" value="PreATP-grasp_dom_sf"/>
</dbReference>
<dbReference type="NCBIfam" id="TIGR01205">
    <property type="entry name" value="D_ala_D_alaTIGR"/>
    <property type="match status" value="1"/>
</dbReference>
<dbReference type="NCBIfam" id="NF002378">
    <property type="entry name" value="PRK01372.1"/>
    <property type="match status" value="1"/>
</dbReference>
<dbReference type="PANTHER" id="PTHR23132">
    <property type="entry name" value="D-ALANINE--D-ALANINE LIGASE"/>
    <property type="match status" value="1"/>
</dbReference>
<dbReference type="PANTHER" id="PTHR23132:SF23">
    <property type="entry name" value="D-ALANINE--D-ALANINE LIGASE B"/>
    <property type="match status" value="1"/>
</dbReference>
<dbReference type="Pfam" id="PF07478">
    <property type="entry name" value="Dala_Dala_lig_C"/>
    <property type="match status" value="1"/>
</dbReference>
<dbReference type="Pfam" id="PF01820">
    <property type="entry name" value="Dala_Dala_lig_N"/>
    <property type="match status" value="1"/>
</dbReference>
<dbReference type="PIRSF" id="PIRSF039102">
    <property type="entry name" value="Ddl/VanB"/>
    <property type="match status" value="1"/>
</dbReference>
<dbReference type="SUPFAM" id="SSF56059">
    <property type="entry name" value="Glutathione synthetase ATP-binding domain-like"/>
    <property type="match status" value="1"/>
</dbReference>
<dbReference type="SUPFAM" id="SSF52440">
    <property type="entry name" value="PreATP-grasp domain"/>
    <property type="match status" value="1"/>
</dbReference>
<dbReference type="PROSITE" id="PS50975">
    <property type="entry name" value="ATP_GRASP"/>
    <property type="match status" value="1"/>
</dbReference>
<dbReference type="PROSITE" id="PS00843">
    <property type="entry name" value="DALA_DALA_LIGASE_1"/>
    <property type="match status" value="1"/>
</dbReference>
<dbReference type="PROSITE" id="PS00844">
    <property type="entry name" value="DALA_DALA_LIGASE_2"/>
    <property type="match status" value="1"/>
</dbReference>
<evidence type="ECO:0000250" key="1"/>
<evidence type="ECO:0000255" key="2">
    <source>
        <dbReference type="HAMAP-Rule" id="MF_00047"/>
    </source>
</evidence>
<protein>
    <recommendedName>
        <fullName evidence="2">D-alanine--D-alanine ligase</fullName>
        <ecNumber evidence="2">6.3.2.4</ecNumber>
    </recommendedName>
    <alternativeName>
        <fullName evidence="2">D-Ala-D-Ala ligase</fullName>
    </alternativeName>
    <alternativeName>
        <fullName evidence="2">D-alanylalanine synthetase</fullName>
    </alternativeName>
</protein>